<accession>Q04CX2</accession>
<evidence type="ECO:0000255" key="1">
    <source>
        <dbReference type="HAMAP-Rule" id="MF_00365"/>
    </source>
</evidence>
<reference key="1">
    <citation type="journal article" date="2006" name="Proc. Natl. Acad. Sci. U.S.A.">
        <title>Comparative genomics of the lactic acid bacteria.</title>
        <authorList>
            <person name="Makarova K.S."/>
            <person name="Slesarev A."/>
            <person name="Wolf Y.I."/>
            <person name="Sorokin A."/>
            <person name="Mirkin B."/>
            <person name="Koonin E.V."/>
            <person name="Pavlov A."/>
            <person name="Pavlova N."/>
            <person name="Karamychev V."/>
            <person name="Polouchine N."/>
            <person name="Shakhova V."/>
            <person name="Grigoriev I."/>
            <person name="Lou Y."/>
            <person name="Rohksar D."/>
            <person name="Lucas S."/>
            <person name="Huang K."/>
            <person name="Goodstein D.M."/>
            <person name="Hawkins T."/>
            <person name="Plengvidhya V."/>
            <person name="Welker D."/>
            <person name="Hughes J."/>
            <person name="Goh Y."/>
            <person name="Benson A."/>
            <person name="Baldwin K."/>
            <person name="Lee J.-H."/>
            <person name="Diaz-Muniz I."/>
            <person name="Dosti B."/>
            <person name="Smeianov V."/>
            <person name="Wechter W."/>
            <person name="Barabote R."/>
            <person name="Lorca G."/>
            <person name="Altermann E."/>
            <person name="Barrangou R."/>
            <person name="Ganesan B."/>
            <person name="Xie Y."/>
            <person name="Rawsthorne H."/>
            <person name="Tamir D."/>
            <person name="Parker C."/>
            <person name="Breidt F."/>
            <person name="Broadbent J.R."/>
            <person name="Hutkins R."/>
            <person name="O'Sullivan D."/>
            <person name="Steele J."/>
            <person name="Unlu G."/>
            <person name="Saier M.H. Jr."/>
            <person name="Klaenhammer T."/>
            <person name="Richardson P."/>
            <person name="Kozyavkin S."/>
            <person name="Weimer B.C."/>
            <person name="Mills D.A."/>
        </authorList>
    </citation>
    <scope>NUCLEOTIDE SEQUENCE [LARGE SCALE GENOMIC DNA]</scope>
    <source>
        <strain>ATCC BAA-365 / Lb-18</strain>
    </source>
</reference>
<keyword id="KW-0067">ATP-binding</keyword>
<keyword id="KW-0963">Cytoplasm</keyword>
<keyword id="KW-0227">DNA damage</keyword>
<keyword id="KW-0234">DNA repair</keyword>
<keyword id="KW-0235">DNA replication</keyword>
<keyword id="KW-0238">DNA-binding</keyword>
<keyword id="KW-0547">Nucleotide-binding</keyword>
<keyword id="KW-0742">SOS response</keyword>
<dbReference type="EMBL" id="CP000412">
    <property type="protein sequence ID" value="ABJ57700.1"/>
    <property type="molecule type" value="Genomic_DNA"/>
</dbReference>
<dbReference type="RefSeq" id="WP_011677860.1">
    <property type="nucleotide sequence ID" value="NC_008529.1"/>
</dbReference>
<dbReference type="SMR" id="Q04CX2"/>
<dbReference type="KEGG" id="lbu:LBUL_0004"/>
<dbReference type="HOGENOM" id="CLU_040267_0_1_9"/>
<dbReference type="BioCyc" id="LDEL321956:LBUL_RS00020-MONOMER"/>
<dbReference type="GO" id="GO:0005737">
    <property type="term" value="C:cytoplasm"/>
    <property type="evidence" value="ECO:0007669"/>
    <property type="project" value="UniProtKB-SubCell"/>
</dbReference>
<dbReference type="GO" id="GO:0005524">
    <property type="term" value="F:ATP binding"/>
    <property type="evidence" value="ECO:0007669"/>
    <property type="project" value="UniProtKB-UniRule"/>
</dbReference>
<dbReference type="GO" id="GO:0003697">
    <property type="term" value="F:single-stranded DNA binding"/>
    <property type="evidence" value="ECO:0007669"/>
    <property type="project" value="UniProtKB-UniRule"/>
</dbReference>
<dbReference type="GO" id="GO:0006260">
    <property type="term" value="P:DNA replication"/>
    <property type="evidence" value="ECO:0007669"/>
    <property type="project" value="UniProtKB-UniRule"/>
</dbReference>
<dbReference type="GO" id="GO:0000731">
    <property type="term" value="P:DNA synthesis involved in DNA repair"/>
    <property type="evidence" value="ECO:0007669"/>
    <property type="project" value="TreeGrafter"/>
</dbReference>
<dbReference type="GO" id="GO:0006302">
    <property type="term" value="P:double-strand break repair"/>
    <property type="evidence" value="ECO:0007669"/>
    <property type="project" value="TreeGrafter"/>
</dbReference>
<dbReference type="GO" id="GO:0009432">
    <property type="term" value="P:SOS response"/>
    <property type="evidence" value="ECO:0007669"/>
    <property type="project" value="UniProtKB-UniRule"/>
</dbReference>
<dbReference type="CDD" id="cd03242">
    <property type="entry name" value="ABC_RecF"/>
    <property type="match status" value="1"/>
</dbReference>
<dbReference type="Gene3D" id="3.40.50.300">
    <property type="entry name" value="P-loop containing nucleotide triphosphate hydrolases"/>
    <property type="match status" value="1"/>
</dbReference>
<dbReference type="Gene3D" id="1.20.1050.90">
    <property type="entry name" value="RecF/RecN/SMC, N-terminal domain"/>
    <property type="match status" value="1"/>
</dbReference>
<dbReference type="HAMAP" id="MF_00365">
    <property type="entry name" value="RecF"/>
    <property type="match status" value="1"/>
</dbReference>
<dbReference type="InterPro" id="IPR001238">
    <property type="entry name" value="DNA-binding_RecF"/>
</dbReference>
<dbReference type="InterPro" id="IPR018078">
    <property type="entry name" value="DNA-binding_RecF_CS"/>
</dbReference>
<dbReference type="InterPro" id="IPR027417">
    <property type="entry name" value="P-loop_NTPase"/>
</dbReference>
<dbReference type="InterPro" id="IPR003395">
    <property type="entry name" value="RecF/RecN/SMC_N"/>
</dbReference>
<dbReference type="InterPro" id="IPR042174">
    <property type="entry name" value="RecF_2"/>
</dbReference>
<dbReference type="NCBIfam" id="TIGR00611">
    <property type="entry name" value="recf"/>
    <property type="match status" value="1"/>
</dbReference>
<dbReference type="PANTHER" id="PTHR32182">
    <property type="entry name" value="DNA REPLICATION AND REPAIR PROTEIN RECF"/>
    <property type="match status" value="1"/>
</dbReference>
<dbReference type="PANTHER" id="PTHR32182:SF0">
    <property type="entry name" value="DNA REPLICATION AND REPAIR PROTEIN RECF"/>
    <property type="match status" value="1"/>
</dbReference>
<dbReference type="Pfam" id="PF02463">
    <property type="entry name" value="SMC_N"/>
    <property type="match status" value="1"/>
</dbReference>
<dbReference type="SUPFAM" id="SSF52540">
    <property type="entry name" value="P-loop containing nucleoside triphosphate hydrolases"/>
    <property type="match status" value="1"/>
</dbReference>
<dbReference type="PROSITE" id="PS00617">
    <property type="entry name" value="RECF_1"/>
    <property type="match status" value="1"/>
</dbReference>
<dbReference type="PROSITE" id="PS00618">
    <property type="entry name" value="RECF_2"/>
    <property type="match status" value="1"/>
</dbReference>
<proteinExistence type="inferred from homology"/>
<organism>
    <name type="scientific">Lactobacillus delbrueckii subsp. bulgaricus (strain ATCC BAA-365 / Lb-18)</name>
    <dbReference type="NCBI Taxonomy" id="321956"/>
    <lineage>
        <taxon>Bacteria</taxon>
        <taxon>Bacillati</taxon>
        <taxon>Bacillota</taxon>
        <taxon>Bacilli</taxon>
        <taxon>Lactobacillales</taxon>
        <taxon>Lactobacillaceae</taxon>
        <taxon>Lactobacillus</taxon>
    </lineage>
</organism>
<feature type="chain" id="PRO_1000048532" description="DNA replication and repair protein RecF">
    <location>
        <begin position="1"/>
        <end position="381"/>
    </location>
</feature>
<feature type="binding site" evidence="1">
    <location>
        <begin position="30"/>
        <end position="37"/>
    </location>
    <ligand>
        <name>ATP</name>
        <dbReference type="ChEBI" id="CHEBI:30616"/>
    </ligand>
</feature>
<protein>
    <recommendedName>
        <fullName evidence="1">DNA replication and repair protein RecF</fullName>
    </recommendedName>
</protein>
<sequence length="381" mass="43877">MYLSRFKQSGFRNLAPLNLEFDPHVNVFLGENAQGKTNLLEAIYFLAISRSHRTSNDREMIAFGQDFASLAGRVHKRQLDLDLRIVISKKGKSAWVNRVEQARLSKYVGHLNAILFSPEDMELVKGAPSLRRRFMDLEFGQINPEYLYFASQYRQLLQQRNNYLKQLARRQASDQVLLGVLTEQVATAASELIWRRYRYLADLNRYAAEAYRAISGQREELRVLYRPSAKEITAADQPAQIKQKLLDRFAEIADDELRRATTQLGPHRDDLEFQLDGKNAHLFASQGQQRTIALSLKLSEIQLIKQLTGEEPILLLDDVMSELDQNRQAALLNFIHGQTQTFITTTDLDSISQEIVKQPRIFYIHSGQIIEKEEGLNGRRR</sequence>
<name>RECF_LACDB</name>
<comment type="function">
    <text evidence="1">The RecF protein is involved in DNA metabolism; it is required for DNA replication and normal SOS inducibility. RecF binds preferentially to single-stranded, linear DNA. It also seems to bind ATP.</text>
</comment>
<comment type="subcellular location">
    <subcellularLocation>
        <location evidence="1">Cytoplasm</location>
    </subcellularLocation>
</comment>
<comment type="similarity">
    <text evidence="1">Belongs to the RecF family.</text>
</comment>
<gene>
    <name evidence="1" type="primary">recF</name>
    <name type="ordered locus">LBUL_0004</name>
</gene>